<evidence type="ECO:0000255" key="1">
    <source>
        <dbReference type="HAMAP-Rule" id="MF_00170"/>
    </source>
</evidence>
<feature type="chain" id="PRO_1000097685" description="Ribose-5-phosphate isomerase A">
    <location>
        <begin position="1"/>
        <end position="228"/>
    </location>
</feature>
<feature type="active site" description="Proton acceptor" evidence="1">
    <location>
        <position position="107"/>
    </location>
</feature>
<feature type="binding site" evidence="1">
    <location>
        <begin position="32"/>
        <end position="35"/>
    </location>
    <ligand>
        <name>substrate</name>
    </ligand>
</feature>
<feature type="binding site" evidence="1">
    <location>
        <begin position="85"/>
        <end position="88"/>
    </location>
    <ligand>
        <name>substrate</name>
    </ligand>
</feature>
<feature type="binding site" evidence="1">
    <location>
        <begin position="98"/>
        <end position="101"/>
    </location>
    <ligand>
        <name>substrate</name>
    </ligand>
</feature>
<feature type="binding site" evidence="1">
    <location>
        <position position="125"/>
    </location>
    <ligand>
        <name>substrate</name>
    </ligand>
</feature>
<dbReference type="EC" id="5.3.1.6" evidence="1"/>
<dbReference type="EMBL" id="CP001068">
    <property type="protein sequence ID" value="ACD26224.1"/>
    <property type="molecule type" value="Genomic_DNA"/>
</dbReference>
<dbReference type="SMR" id="B2U9W6"/>
<dbReference type="STRING" id="402626.Rpic_1076"/>
<dbReference type="KEGG" id="rpi:Rpic_1076"/>
<dbReference type="eggNOG" id="COG0120">
    <property type="taxonomic scope" value="Bacteria"/>
</dbReference>
<dbReference type="HOGENOM" id="CLU_056590_1_1_4"/>
<dbReference type="UniPathway" id="UPA00115">
    <property type="reaction ID" value="UER00412"/>
</dbReference>
<dbReference type="GO" id="GO:0005829">
    <property type="term" value="C:cytosol"/>
    <property type="evidence" value="ECO:0007669"/>
    <property type="project" value="TreeGrafter"/>
</dbReference>
<dbReference type="GO" id="GO:0004751">
    <property type="term" value="F:ribose-5-phosphate isomerase activity"/>
    <property type="evidence" value="ECO:0007669"/>
    <property type="project" value="UniProtKB-UniRule"/>
</dbReference>
<dbReference type="GO" id="GO:0006014">
    <property type="term" value="P:D-ribose metabolic process"/>
    <property type="evidence" value="ECO:0007669"/>
    <property type="project" value="TreeGrafter"/>
</dbReference>
<dbReference type="GO" id="GO:0009052">
    <property type="term" value="P:pentose-phosphate shunt, non-oxidative branch"/>
    <property type="evidence" value="ECO:0007669"/>
    <property type="project" value="UniProtKB-UniRule"/>
</dbReference>
<dbReference type="CDD" id="cd01398">
    <property type="entry name" value="RPI_A"/>
    <property type="match status" value="1"/>
</dbReference>
<dbReference type="FunFam" id="3.40.50.1360:FF:000001">
    <property type="entry name" value="Ribose-5-phosphate isomerase A"/>
    <property type="match status" value="1"/>
</dbReference>
<dbReference type="Gene3D" id="3.30.70.260">
    <property type="match status" value="1"/>
</dbReference>
<dbReference type="Gene3D" id="3.40.50.1360">
    <property type="match status" value="1"/>
</dbReference>
<dbReference type="HAMAP" id="MF_00170">
    <property type="entry name" value="Rib_5P_isom_A"/>
    <property type="match status" value="1"/>
</dbReference>
<dbReference type="InterPro" id="IPR037171">
    <property type="entry name" value="NagB/RpiA_transferase-like"/>
</dbReference>
<dbReference type="InterPro" id="IPR020672">
    <property type="entry name" value="Ribose5P_isomerase_typA_subgr"/>
</dbReference>
<dbReference type="InterPro" id="IPR004788">
    <property type="entry name" value="Ribose5P_isomerase_type_A"/>
</dbReference>
<dbReference type="NCBIfam" id="NF001924">
    <property type="entry name" value="PRK00702.1"/>
    <property type="match status" value="1"/>
</dbReference>
<dbReference type="NCBIfam" id="TIGR00021">
    <property type="entry name" value="rpiA"/>
    <property type="match status" value="1"/>
</dbReference>
<dbReference type="PANTHER" id="PTHR11934">
    <property type="entry name" value="RIBOSE-5-PHOSPHATE ISOMERASE"/>
    <property type="match status" value="1"/>
</dbReference>
<dbReference type="PANTHER" id="PTHR11934:SF0">
    <property type="entry name" value="RIBOSE-5-PHOSPHATE ISOMERASE"/>
    <property type="match status" value="1"/>
</dbReference>
<dbReference type="Pfam" id="PF06026">
    <property type="entry name" value="Rib_5-P_isom_A"/>
    <property type="match status" value="1"/>
</dbReference>
<dbReference type="SUPFAM" id="SSF75445">
    <property type="entry name" value="D-ribose-5-phosphate isomerase (RpiA), lid domain"/>
    <property type="match status" value="1"/>
</dbReference>
<dbReference type="SUPFAM" id="SSF100950">
    <property type="entry name" value="NagB/RpiA/CoA transferase-like"/>
    <property type="match status" value="1"/>
</dbReference>
<proteinExistence type="inferred from homology"/>
<comment type="function">
    <text evidence="1">Catalyzes the reversible conversion of ribose-5-phosphate to ribulose 5-phosphate.</text>
</comment>
<comment type="catalytic activity">
    <reaction evidence="1">
        <text>aldehydo-D-ribose 5-phosphate = D-ribulose 5-phosphate</text>
        <dbReference type="Rhea" id="RHEA:14657"/>
        <dbReference type="ChEBI" id="CHEBI:58121"/>
        <dbReference type="ChEBI" id="CHEBI:58273"/>
        <dbReference type="EC" id="5.3.1.6"/>
    </reaction>
</comment>
<comment type="pathway">
    <text evidence="1">Carbohydrate degradation; pentose phosphate pathway; D-ribose 5-phosphate from D-ribulose 5-phosphate (non-oxidative stage): step 1/1.</text>
</comment>
<comment type="subunit">
    <text evidence="1">Homodimer.</text>
</comment>
<comment type="similarity">
    <text evidence="1">Belongs to the ribose 5-phosphate isomerase family.</text>
</comment>
<name>RPIA_RALPJ</name>
<accession>B2U9W6</accession>
<sequence>MTQDELKALVAQAAADYVLANVPEGAVLGVGTGSTANLFIDAMAPHKARFAGAVSSSEASTRRLQGHGFTVLDLNEVDAIPVYVDGADEIDASGAMIKGGGGALTREKIVASVASVFVCIADGSKLVETMGAFPLPVEVVPMARAAVARQLAALGGQPRLRMTKEGQIYKTDNGNVIIDVVGLRIADPKGLESVVNEIPGVVTVGLFAKRGANVLLLGTEAGVQRRDF</sequence>
<protein>
    <recommendedName>
        <fullName evidence="1">Ribose-5-phosphate isomerase A</fullName>
        <ecNumber evidence="1">5.3.1.6</ecNumber>
    </recommendedName>
    <alternativeName>
        <fullName evidence="1">Phosphoriboisomerase A</fullName>
        <shortName evidence="1">PRI</shortName>
    </alternativeName>
</protein>
<gene>
    <name evidence="1" type="primary">rpiA</name>
    <name type="ordered locus">Rpic_1076</name>
</gene>
<organism>
    <name type="scientific">Ralstonia pickettii (strain 12J)</name>
    <dbReference type="NCBI Taxonomy" id="402626"/>
    <lineage>
        <taxon>Bacteria</taxon>
        <taxon>Pseudomonadati</taxon>
        <taxon>Pseudomonadota</taxon>
        <taxon>Betaproteobacteria</taxon>
        <taxon>Burkholderiales</taxon>
        <taxon>Burkholderiaceae</taxon>
        <taxon>Ralstonia</taxon>
    </lineage>
</organism>
<reference key="1">
    <citation type="submission" date="2008-05" db="EMBL/GenBank/DDBJ databases">
        <title>Complete sequence of chromosome 1 of Ralstonia pickettii 12J.</title>
        <authorList>
            <person name="Lucas S."/>
            <person name="Copeland A."/>
            <person name="Lapidus A."/>
            <person name="Glavina del Rio T."/>
            <person name="Dalin E."/>
            <person name="Tice H."/>
            <person name="Bruce D."/>
            <person name="Goodwin L."/>
            <person name="Pitluck S."/>
            <person name="Meincke L."/>
            <person name="Brettin T."/>
            <person name="Detter J.C."/>
            <person name="Han C."/>
            <person name="Kuske C.R."/>
            <person name="Schmutz J."/>
            <person name="Larimer F."/>
            <person name="Land M."/>
            <person name="Hauser L."/>
            <person name="Kyrpides N."/>
            <person name="Mikhailova N."/>
            <person name="Marsh T."/>
            <person name="Richardson P."/>
        </authorList>
    </citation>
    <scope>NUCLEOTIDE SEQUENCE [LARGE SCALE GENOMIC DNA]</scope>
    <source>
        <strain>12J</strain>
    </source>
</reference>
<keyword id="KW-0413">Isomerase</keyword>